<keyword id="KW-0030">Aminoacyl-tRNA synthetase</keyword>
<keyword id="KW-0067">ATP-binding</keyword>
<keyword id="KW-0963">Cytoplasm</keyword>
<keyword id="KW-0436">Ligase</keyword>
<keyword id="KW-0547">Nucleotide-binding</keyword>
<keyword id="KW-0648">Protein biosynthesis</keyword>
<keyword id="KW-1185">Reference proteome</keyword>
<comment type="catalytic activity">
    <reaction evidence="1">
        <text>tRNA(Arg) + L-arginine + ATP = L-arginyl-tRNA(Arg) + AMP + diphosphate</text>
        <dbReference type="Rhea" id="RHEA:20301"/>
        <dbReference type="Rhea" id="RHEA-COMP:9658"/>
        <dbReference type="Rhea" id="RHEA-COMP:9673"/>
        <dbReference type="ChEBI" id="CHEBI:30616"/>
        <dbReference type="ChEBI" id="CHEBI:32682"/>
        <dbReference type="ChEBI" id="CHEBI:33019"/>
        <dbReference type="ChEBI" id="CHEBI:78442"/>
        <dbReference type="ChEBI" id="CHEBI:78513"/>
        <dbReference type="ChEBI" id="CHEBI:456215"/>
        <dbReference type="EC" id="6.1.1.19"/>
    </reaction>
</comment>
<comment type="subunit">
    <text evidence="1">Monomer.</text>
</comment>
<comment type="subcellular location">
    <subcellularLocation>
        <location evidence="1">Cytoplasm</location>
    </subcellularLocation>
</comment>
<comment type="similarity">
    <text evidence="1">Belongs to the class-I aminoacyl-tRNA synthetase family.</text>
</comment>
<organism>
    <name type="scientific">Shewanella pealeana (strain ATCC 700345 / ANG-SQ1)</name>
    <dbReference type="NCBI Taxonomy" id="398579"/>
    <lineage>
        <taxon>Bacteria</taxon>
        <taxon>Pseudomonadati</taxon>
        <taxon>Pseudomonadota</taxon>
        <taxon>Gammaproteobacteria</taxon>
        <taxon>Alteromonadales</taxon>
        <taxon>Shewanellaceae</taxon>
        <taxon>Shewanella</taxon>
    </lineage>
</organism>
<gene>
    <name evidence="1" type="primary">argS</name>
    <name type="ordered locus">Spea_3779</name>
</gene>
<accession>A8H953</accession>
<sequence length="581" mass="64689">MKSHTQSLLAESLNALKQQGIVPADFEARIQVDRTKDKSHGDFATNLAMMLTKAAGKNPRELAQLLIDNLPESSHVEKVEIAGPGFINFFIDDNALANQLMAALNSDTLGIELPASQTVVVDYSSPNLAKEMHVGHLRSTIIGDSVVRALEFMGHKVIRQNHVGDWGTQFGMLLAYMEELRAANGEQAKMELSDLETFYRAAKVRFDESEEFATRARKLVVALQSGDEYCNKLWREFNDISLSHCHELYERLGVSLTRADVRGESAYNSDLAQVVADLDSQGLLSESNGAKVVFQDEFKNKEGEPLPVIIQKADGGYLYATSDLAAMRYRSNVLNADRALYFVDLRQALHFQQVFKLAKTAKFVREEMSFEHMGFGTMNGEDGRPFKTRSGGVVKLIDLLKEADIRALDLVRSKNPDMDEAELAEIARVVGIASVKYADLSKNRASDYIFSFEQMLSFEGNTAPYLLYAYTRVAGIFKRAQDVDLSDAKIILEHEKEKDLGTKLAQFGEVMARMVSKGQPHALCGYLFELAGAFSSFYEACPVLAAETEELKKSRLLLSQLTAKTLKQGLNLLGLETLERM</sequence>
<name>SYR_SHEPA</name>
<feature type="chain" id="PRO_1000076231" description="Arginine--tRNA ligase">
    <location>
        <begin position="1"/>
        <end position="581"/>
    </location>
</feature>
<feature type="short sequence motif" description="'HIGH' region">
    <location>
        <begin position="126"/>
        <end position="136"/>
    </location>
</feature>
<reference key="1">
    <citation type="submission" date="2007-10" db="EMBL/GenBank/DDBJ databases">
        <title>Complete sequence of Shewanella pealeana ATCC 700345.</title>
        <authorList>
            <consortium name="US DOE Joint Genome Institute"/>
            <person name="Copeland A."/>
            <person name="Lucas S."/>
            <person name="Lapidus A."/>
            <person name="Barry K."/>
            <person name="Glavina del Rio T."/>
            <person name="Dalin E."/>
            <person name="Tice H."/>
            <person name="Pitluck S."/>
            <person name="Chertkov O."/>
            <person name="Brettin T."/>
            <person name="Bruce D."/>
            <person name="Detter J.C."/>
            <person name="Han C."/>
            <person name="Schmutz J."/>
            <person name="Larimer F."/>
            <person name="Land M."/>
            <person name="Hauser L."/>
            <person name="Kyrpides N."/>
            <person name="Kim E."/>
            <person name="Zhao J.-S.Z."/>
            <person name="Manno D."/>
            <person name="Hawari J."/>
            <person name="Richardson P."/>
        </authorList>
    </citation>
    <scope>NUCLEOTIDE SEQUENCE [LARGE SCALE GENOMIC DNA]</scope>
    <source>
        <strain>ATCC 700345 / ANG-SQ1</strain>
    </source>
</reference>
<evidence type="ECO:0000255" key="1">
    <source>
        <dbReference type="HAMAP-Rule" id="MF_00123"/>
    </source>
</evidence>
<protein>
    <recommendedName>
        <fullName evidence="1">Arginine--tRNA ligase</fullName>
        <ecNumber evidence="1">6.1.1.19</ecNumber>
    </recommendedName>
    <alternativeName>
        <fullName evidence="1">Arginyl-tRNA synthetase</fullName>
        <shortName evidence="1">ArgRS</shortName>
    </alternativeName>
</protein>
<dbReference type="EC" id="6.1.1.19" evidence="1"/>
<dbReference type="EMBL" id="CP000851">
    <property type="protein sequence ID" value="ABV89090.1"/>
    <property type="molecule type" value="Genomic_DNA"/>
</dbReference>
<dbReference type="RefSeq" id="WP_012156972.1">
    <property type="nucleotide sequence ID" value="NC_009901.1"/>
</dbReference>
<dbReference type="SMR" id="A8H953"/>
<dbReference type="STRING" id="398579.Spea_3779"/>
<dbReference type="KEGG" id="spl:Spea_3779"/>
<dbReference type="eggNOG" id="COG0018">
    <property type="taxonomic scope" value="Bacteria"/>
</dbReference>
<dbReference type="HOGENOM" id="CLU_006406_5_1_6"/>
<dbReference type="OrthoDB" id="9803211at2"/>
<dbReference type="Proteomes" id="UP000002608">
    <property type="component" value="Chromosome"/>
</dbReference>
<dbReference type="GO" id="GO:0005737">
    <property type="term" value="C:cytoplasm"/>
    <property type="evidence" value="ECO:0007669"/>
    <property type="project" value="UniProtKB-SubCell"/>
</dbReference>
<dbReference type="GO" id="GO:0004814">
    <property type="term" value="F:arginine-tRNA ligase activity"/>
    <property type="evidence" value="ECO:0007669"/>
    <property type="project" value="UniProtKB-UniRule"/>
</dbReference>
<dbReference type="GO" id="GO:0005524">
    <property type="term" value="F:ATP binding"/>
    <property type="evidence" value="ECO:0007669"/>
    <property type="project" value="UniProtKB-UniRule"/>
</dbReference>
<dbReference type="GO" id="GO:0006420">
    <property type="term" value="P:arginyl-tRNA aminoacylation"/>
    <property type="evidence" value="ECO:0007669"/>
    <property type="project" value="UniProtKB-UniRule"/>
</dbReference>
<dbReference type="CDD" id="cd07956">
    <property type="entry name" value="Anticodon_Ia_Arg"/>
    <property type="match status" value="1"/>
</dbReference>
<dbReference type="CDD" id="cd00671">
    <property type="entry name" value="ArgRS_core"/>
    <property type="match status" value="1"/>
</dbReference>
<dbReference type="FunFam" id="3.30.1360.70:FF:000003">
    <property type="entry name" value="Arginine--tRNA ligase"/>
    <property type="match status" value="1"/>
</dbReference>
<dbReference type="FunFam" id="3.40.50.620:FF:000030">
    <property type="entry name" value="Arginine--tRNA ligase"/>
    <property type="match status" value="1"/>
</dbReference>
<dbReference type="FunFam" id="1.10.730.10:FF:000006">
    <property type="entry name" value="Arginyl-tRNA synthetase 2, mitochondrial"/>
    <property type="match status" value="1"/>
</dbReference>
<dbReference type="Gene3D" id="3.30.1360.70">
    <property type="entry name" value="Arginyl tRNA synthetase N-terminal domain"/>
    <property type="match status" value="1"/>
</dbReference>
<dbReference type="Gene3D" id="3.40.50.620">
    <property type="entry name" value="HUPs"/>
    <property type="match status" value="1"/>
</dbReference>
<dbReference type="Gene3D" id="1.10.730.10">
    <property type="entry name" value="Isoleucyl-tRNA Synthetase, Domain 1"/>
    <property type="match status" value="1"/>
</dbReference>
<dbReference type="HAMAP" id="MF_00123">
    <property type="entry name" value="Arg_tRNA_synth"/>
    <property type="match status" value="1"/>
</dbReference>
<dbReference type="InterPro" id="IPR001412">
    <property type="entry name" value="aa-tRNA-synth_I_CS"/>
</dbReference>
<dbReference type="InterPro" id="IPR001278">
    <property type="entry name" value="Arg-tRNA-ligase"/>
</dbReference>
<dbReference type="InterPro" id="IPR005148">
    <property type="entry name" value="Arg-tRNA-synth_N"/>
</dbReference>
<dbReference type="InterPro" id="IPR036695">
    <property type="entry name" value="Arg-tRNA-synth_N_sf"/>
</dbReference>
<dbReference type="InterPro" id="IPR035684">
    <property type="entry name" value="ArgRS_core"/>
</dbReference>
<dbReference type="InterPro" id="IPR008909">
    <property type="entry name" value="DALR_anticod-bd"/>
</dbReference>
<dbReference type="InterPro" id="IPR014729">
    <property type="entry name" value="Rossmann-like_a/b/a_fold"/>
</dbReference>
<dbReference type="InterPro" id="IPR009080">
    <property type="entry name" value="tRNAsynth_Ia_anticodon-bd"/>
</dbReference>
<dbReference type="NCBIfam" id="TIGR00456">
    <property type="entry name" value="argS"/>
    <property type="match status" value="1"/>
</dbReference>
<dbReference type="PANTHER" id="PTHR11956:SF5">
    <property type="entry name" value="ARGININE--TRNA LIGASE, CYTOPLASMIC"/>
    <property type="match status" value="1"/>
</dbReference>
<dbReference type="PANTHER" id="PTHR11956">
    <property type="entry name" value="ARGINYL-TRNA SYNTHETASE"/>
    <property type="match status" value="1"/>
</dbReference>
<dbReference type="Pfam" id="PF03485">
    <property type="entry name" value="Arg_tRNA_synt_N"/>
    <property type="match status" value="1"/>
</dbReference>
<dbReference type="Pfam" id="PF05746">
    <property type="entry name" value="DALR_1"/>
    <property type="match status" value="1"/>
</dbReference>
<dbReference type="Pfam" id="PF00750">
    <property type="entry name" value="tRNA-synt_1d"/>
    <property type="match status" value="1"/>
</dbReference>
<dbReference type="PRINTS" id="PR01038">
    <property type="entry name" value="TRNASYNTHARG"/>
</dbReference>
<dbReference type="SMART" id="SM01016">
    <property type="entry name" value="Arg_tRNA_synt_N"/>
    <property type="match status" value="1"/>
</dbReference>
<dbReference type="SMART" id="SM00836">
    <property type="entry name" value="DALR_1"/>
    <property type="match status" value="1"/>
</dbReference>
<dbReference type="SUPFAM" id="SSF47323">
    <property type="entry name" value="Anticodon-binding domain of a subclass of class I aminoacyl-tRNA synthetases"/>
    <property type="match status" value="1"/>
</dbReference>
<dbReference type="SUPFAM" id="SSF55190">
    <property type="entry name" value="Arginyl-tRNA synthetase (ArgRS), N-terminal 'additional' domain"/>
    <property type="match status" value="1"/>
</dbReference>
<dbReference type="SUPFAM" id="SSF52374">
    <property type="entry name" value="Nucleotidylyl transferase"/>
    <property type="match status" value="1"/>
</dbReference>
<dbReference type="PROSITE" id="PS00178">
    <property type="entry name" value="AA_TRNA_LIGASE_I"/>
    <property type="match status" value="1"/>
</dbReference>
<proteinExistence type="inferred from homology"/>